<reference key="1">
    <citation type="submission" date="1999-08" db="EMBL/GenBank/DDBJ databases">
        <title>Molecular cloning and disruption of the gene encoding gamma glutamycysteine synthetase in Candida albicans.</title>
        <authorList>
            <person name="Baek Y.-U."/>
            <person name="Kim Y.-R."/>
            <person name="Huh W.-K."/>
            <person name="Hwang C.-S."/>
            <person name="Kang C.-O."/>
        </authorList>
    </citation>
    <scope>NUCLEOTIDE SEQUENCE [GENOMIC DNA]</scope>
    <source>
        <strain>ATCC 10231 / CBS 6431 / CIP 48.72 / DSM 1386 / NBRC 1594</strain>
    </source>
</reference>
<dbReference type="EC" id="6.3.2.2"/>
<dbReference type="EMBL" id="AF176677">
    <property type="protein sequence ID" value="AAG43415.1"/>
    <property type="molecule type" value="Genomic_DNA"/>
</dbReference>
<dbReference type="SMR" id="Q9HF78"/>
<dbReference type="VEuPathDB" id="FungiDB:C1_07880C_A"/>
<dbReference type="VEuPathDB" id="FungiDB:CAWG_00632"/>
<dbReference type="UniPathway" id="UPA00142">
    <property type="reaction ID" value="UER00209"/>
</dbReference>
<dbReference type="GO" id="GO:0005737">
    <property type="term" value="C:cytoplasm"/>
    <property type="evidence" value="ECO:0007669"/>
    <property type="project" value="EnsemblFungi"/>
</dbReference>
<dbReference type="GO" id="GO:0005524">
    <property type="term" value="F:ATP binding"/>
    <property type="evidence" value="ECO:0007669"/>
    <property type="project" value="UniProtKB-KW"/>
</dbReference>
<dbReference type="GO" id="GO:0004357">
    <property type="term" value="F:glutamate-cysteine ligase activity"/>
    <property type="evidence" value="ECO:0007669"/>
    <property type="project" value="UniProtKB-EC"/>
</dbReference>
<dbReference type="GO" id="GO:0006750">
    <property type="term" value="P:glutathione biosynthetic process"/>
    <property type="evidence" value="ECO:0007669"/>
    <property type="project" value="UniProtKB-UniPathway"/>
</dbReference>
<dbReference type="GO" id="GO:0046686">
    <property type="term" value="P:response to cadmium ion"/>
    <property type="evidence" value="ECO:0007669"/>
    <property type="project" value="EnsemblFungi"/>
</dbReference>
<dbReference type="GO" id="GO:0042542">
    <property type="term" value="P:response to hydrogen peroxide"/>
    <property type="evidence" value="ECO:0007669"/>
    <property type="project" value="EnsemblFungi"/>
</dbReference>
<dbReference type="FunFam" id="3.30.590.50:FF:000009">
    <property type="entry name" value="Glutamate--cysteine ligase"/>
    <property type="match status" value="1"/>
</dbReference>
<dbReference type="FunFam" id="3.30.590.50:FF:000002">
    <property type="entry name" value="Glutamate--cysteine ligase catalytic subunit"/>
    <property type="match status" value="1"/>
</dbReference>
<dbReference type="Gene3D" id="3.30.590.50">
    <property type="match status" value="2"/>
</dbReference>
<dbReference type="InterPro" id="IPR004308">
    <property type="entry name" value="GCS"/>
</dbReference>
<dbReference type="InterPro" id="IPR014746">
    <property type="entry name" value="Gln_synth/guanido_kin_cat_dom"/>
</dbReference>
<dbReference type="PANTHER" id="PTHR11164">
    <property type="entry name" value="GLUTAMATE CYSTEINE LIGASE"/>
    <property type="match status" value="1"/>
</dbReference>
<dbReference type="PANTHER" id="PTHR11164:SF0">
    <property type="entry name" value="GLUTAMATE--CYSTEINE LIGASE CATALYTIC SUBUNIT"/>
    <property type="match status" value="1"/>
</dbReference>
<dbReference type="Pfam" id="PF03074">
    <property type="entry name" value="GCS"/>
    <property type="match status" value="1"/>
</dbReference>
<dbReference type="SUPFAM" id="SSF55931">
    <property type="entry name" value="Glutamine synthetase/guanido kinase"/>
    <property type="match status" value="1"/>
</dbReference>
<proteinExistence type="inferred from homology"/>
<protein>
    <recommendedName>
        <fullName>Glutamate--cysteine ligase</fullName>
        <ecNumber>6.3.2.2</ecNumber>
    </recommendedName>
    <alternativeName>
        <fullName>Gamma-ECS</fullName>
        <shortName>GCS</shortName>
    </alternativeName>
    <alternativeName>
        <fullName>Gamma-glutamylcysteine synthetase</fullName>
    </alternativeName>
</protein>
<name>GSH1_CANAX</name>
<evidence type="ECO:0000256" key="1">
    <source>
        <dbReference type="SAM" id="MobiDB-lite"/>
    </source>
</evidence>
<evidence type="ECO:0000305" key="2"/>
<sequence>MGLLSIGTPLSWDESKKYNNHVRTNGITQLINIFKQHGYRENDVFLWGDEVEYMLVDFDETKKTARLSIDKDYIINDLNDPDKLLPIAEKQDVSYHPEYGRFMVEATPAKPYNGNLLSDYLYIEKNMIIRRQLCEDNLPSHIKLLTLTTFPRMGCNIFTSPPSKPDGIASQSLFLPDEIINRHARFPTLTANIRKRKGHKVAINLPIYPDKSTKLLDDTIPQNRELFDSDKEPWIGASKPGFIYMDSMGFGMGSSCLQITMQTKNISQARYLYDSLAPIAPIMLSLSAAAPIFKGFLVDQDVRWNVVSGAVDDRTFIEKGQEPYSGYHLFGGLDIDAQDKLRINNHQINQQGDLLDLYTKDGKPIQRVPQSRYDSIDNYLNDNYYDTKYFQDEYNDLNAPINEQVYQRLIDEGKLDKYMANHFAHLFIRDPLVIFSERINQDNNLENDHFENIQSTNWQTLRFKPPALYTKDTDLTTKPGWRVEFRPMEIQLTDFENAAYSSFITLLSKAILKFQPNFYIPLSKVEINMKLAHKVDSTLKDKFWFRSFELWNIDPQEFDDYGFEWFDQFINGNQQQNGHVNNNNNNDKKTKNDPIIVNGSTTTTNGTNSGSGITETNGTMLPKGCEGKTVEEINDVDDNGIDQRYTICQLINGSGEFPGFIKLVIKLIATDLVPQALNNSTISKEQLIEN</sequence>
<organism>
    <name type="scientific">Candida albicans</name>
    <name type="common">Yeast</name>
    <dbReference type="NCBI Taxonomy" id="5476"/>
    <lineage>
        <taxon>Eukaryota</taxon>
        <taxon>Fungi</taxon>
        <taxon>Dikarya</taxon>
        <taxon>Ascomycota</taxon>
        <taxon>Saccharomycotina</taxon>
        <taxon>Pichiomycetes</taxon>
        <taxon>Debaryomycetaceae</taxon>
        <taxon>Candida/Lodderomyces clade</taxon>
        <taxon>Candida</taxon>
    </lineage>
</organism>
<comment type="catalytic activity">
    <reaction>
        <text>L-cysteine + L-glutamate + ATP = gamma-L-glutamyl-L-cysteine + ADP + phosphate + H(+)</text>
        <dbReference type="Rhea" id="RHEA:13285"/>
        <dbReference type="ChEBI" id="CHEBI:15378"/>
        <dbReference type="ChEBI" id="CHEBI:29985"/>
        <dbReference type="ChEBI" id="CHEBI:30616"/>
        <dbReference type="ChEBI" id="CHEBI:35235"/>
        <dbReference type="ChEBI" id="CHEBI:43474"/>
        <dbReference type="ChEBI" id="CHEBI:58173"/>
        <dbReference type="ChEBI" id="CHEBI:456216"/>
        <dbReference type="EC" id="6.3.2.2"/>
    </reaction>
</comment>
<comment type="pathway">
    <text>Sulfur metabolism; glutathione biosynthesis; glutathione from L-cysteine and L-glutamate: step 1/2.</text>
</comment>
<comment type="similarity">
    <text evidence="2">Belongs to the glutamate--cysteine ligase type 3 family.</text>
</comment>
<gene>
    <name type="primary">GCS1</name>
</gene>
<keyword id="KW-0067">ATP-binding</keyword>
<keyword id="KW-0317">Glutathione biosynthesis</keyword>
<keyword id="KW-0436">Ligase</keyword>
<keyword id="KW-0547">Nucleotide-binding</keyword>
<feature type="chain" id="PRO_0000192569" description="Glutamate--cysteine ligase">
    <location>
        <begin position="1"/>
        <end position="690"/>
    </location>
</feature>
<feature type="region of interest" description="Disordered" evidence="1">
    <location>
        <begin position="574"/>
        <end position="620"/>
    </location>
</feature>
<feature type="compositionally biased region" description="Low complexity" evidence="1">
    <location>
        <begin position="574"/>
        <end position="585"/>
    </location>
</feature>
<feature type="compositionally biased region" description="Low complexity" evidence="1">
    <location>
        <begin position="598"/>
        <end position="619"/>
    </location>
</feature>
<accession>Q9HF78</accession>